<evidence type="ECO:0000250" key="1"/>
<evidence type="ECO:0000250" key="2">
    <source>
        <dbReference type="UniProtKB" id="P0CG47"/>
    </source>
</evidence>
<evidence type="ECO:0000255" key="3">
    <source>
        <dbReference type="PROSITE-ProRule" id="PRU00214"/>
    </source>
</evidence>
<evidence type="ECO:0000305" key="4"/>
<name>UBB_CAVPO</name>
<dbReference type="EMBL" id="D83208">
    <property type="protein sequence ID" value="BAA11842.1"/>
    <property type="molecule type" value="mRNA"/>
</dbReference>
<dbReference type="RefSeq" id="NP_001166536.1">
    <property type="nucleotide sequence ID" value="NM_001173065.1"/>
</dbReference>
<dbReference type="SMR" id="P0CG54"/>
<dbReference type="FunCoup" id="P0CG54">
    <property type="interactions" value="560"/>
</dbReference>
<dbReference type="STRING" id="10141.ENSCPOP00000029946"/>
<dbReference type="GeneID" id="100286786"/>
<dbReference type="KEGG" id="cpoc:100286786"/>
<dbReference type="CTD" id="7316"/>
<dbReference type="eggNOG" id="KOG0003">
    <property type="taxonomic scope" value="Eukaryota"/>
</dbReference>
<dbReference type="InParanoid" id="P0CG54"/>
<dbReference type="OrthoDB" id="428577at2759"/>
<dbReference type="Proteomes" id="UP000005447">
    <property type="component" value="Unassembled WGS sequence"/>
</dbReference>
<dbReference type="GO" id="GO:0005741">
    <property type="term" value="C:mitochondrial outer membrane"/>
    <property type="evidence" value="ECO:0007669"/>
    <property type="project" value="UniProtKB-SubCell"/>
</dbReference>
<dbReference type="GO" id="GO:0005634">
    <property type="term" value="C:nucleus"/>
    <property type="evidence" value="ECO:0007669"/>
    <property type="project" value="UniProtKB-SubCell"/>
</dbReference>
<dbReference type="CDD" id="cd01803">
    <property type="entry name" value="Ubl_ubiquitin"/>
    <property type="match status" value="4"/>
</dbReference>
<dbReference type="FunFam" id="3.10.20.90:FF:000158">
    <property type="entry name" value="Polyubiquitin 5"/>
    <property type="match status" value="4"/>
</dbReference>
<dbReference type="Gene3D" id="3.10.20.90">
    <property type="entry name" value="Phosphatidylinositol 3-kinase Catalytic Subunit, Chain A, domain 1"/>
    <property type="match status" value="4"/>
</dbReference>
<dbReference type="InterPro" id="IPR000626">
    <property type="entry name" value="Ubiquitin-like_dom"/>
</dbReference>
<dbReference type="InterPro" id="IPR029071">
    <property type="entry name" value="Ubiquitin-like_domsf"/>
</dbReference>
<dbReference type="InterPro" id="IPR019954">
    <property type="entry name" value="Ubiquitin_CS"/>
</dbReference>
<dbReference type="InterPro" id="IPR019956">
    <property type="entry name" value="Ubiquitin_dom"/>
</dbReference>
<dbReference type="InterPro" id="IPR050158">
    <property type="entry name" value="Ubiquitin_ubiquitin-like"/>
</dbReference>
<dbReference type="PANTHER" id="PTHR10666">
    <property type="entry name" value="UBIQUITIN"/>
    <property type="match status" value="1"/>
</dbReference>
<dbReference type="Pfam" id="PF00240">
    <property type="entry name" value="ubiquitin"/>
    <property type="match status" value="4"/>
</dbReference>
<dbReference type="PRINTS" id="PR00348">
    <property type="entry name" value="UBIQUITIN"/>
</dbReference>
<dbReference type="SMART" id="SM00213">
    <property type="entry name" value="UBQ"/>
    <property type="match status" value="4"/>
</dbReference>
<dbReference type="SUPFAM" id="SSF54236">
    <property type="entry name" value="Ubiquitin-like"/>
    <property type="match status" value="4"/>
</dbReference>
<dbReference type="PROSITE" id="PS00299">
    <property type="entry name" value="UBIQUITIN_1"/>
    <property type="match status" value="4"/>
</dbReference>
<dbReference type="PROSITE" id="PS50053">
    <property type="entry name" value="UBIQUITIN_2"/>
    <property type="match status" value="4"/>
</dbReference>
<keyword id="KW-0013">ADP-ribosylation</keyword>
<keyword id="KW-0963">Cytoplasm</keyword>
<keyword id="KW-1017">Isopeptide bond</keyword>
<keyword id="KW-0472">Membrane</keyword>
<keyword id="KW-0496">Mitochondrion</keyword>
<keyword id="KW-1000">Mitochondrion outer membrane</keyword>
<keyword id="KW-0539">Nucleus</keyword>
<keyword id="KW-0597">Phosphoprotein</keyword>
<keyword id="KW-1185">Reference proteome</keyword>
<keyword id="KW-0677">Repeat</keyword>
<keyword id="KW-0832">Ubl conjugation</keyword>
<gene>
    <name type="primary">UBB</name>
    <name type="synonym">UBIY</name>
</gene>
<proteinExistence type="evidence at transcript level"/>
<reference key="1">
    <citation type="submission" date="1996-02" db="EMBL/GenBank/DDBJ databases">
        <title>Ascorbate-dependent expression of ubiquitin genes in guinea pig.</title>
        <authorList>
            <person name="Tsukagoshi N."/>
        </authorList>
    </citation>
    <scope>NUCLEOTIDE SEQUENCE [MRNA]</scope>
    <source>
        <tissue>Spleen</tissue>
    </source>
</reference>
<feature type="chain" id="PRO_0000114795" description="Ubiquitin">
    <location>
        <begin position="1"/>
        <end position="76"/>
    </location>
</feature>
<feature type="chain" id="PRO_0000396154" description="Ubiquitin">
    <location>
        <begin position="77"/>
        <end position="152"/>
    </location>
</feature>
<feature type="chain" id="PRO_0000396155" description="Ubiquitin">
    <location>
        <begin position="153"/>
        <end position="228"/>
    </location>
</feature>
<feature type="chain" id="PRO_0000396156" description="Ubiquitin">
    <location>
        <begin position="229"/>
        <end position="304"/>
    </location>
</feature>
<feature type="propeptide" id="PRO_0000396157">
    <location>
        <begin position="305"/>
        <end position="311"/>
    </location>
</feature>
<feature type="domain" description="Ubiquitin-like 1" evidence="3">
    <location>
        <begin position="1"/>
        <end position="76"/>
    </location>
</feature>
<feature type="domain" description="Ubiquitin-like 2" evidence="3">
    <location>
        <begin position="77"/>
        <end position="152"/>
    </location>
</feature>
<feature type="domain" description="Ubiquitin-like 3" evidence="3">
    <location>
        <begin position="153"/>
        <end position="228"/>
    </location>
</feature>
<feature type="domain" description="Ubiquitin-like 4" evidence="3">
    <location>
        <begin position="229"/>
        <end position="304"/>
    </location>
</feature>
<feature type="site" description="Interacts with activating enzyme">
    <location>
        <position position="54"/>
    </location>
</feature>
<feature type="site" description="Essential for function">
    <location>
        <position position="68"/>
    </location>
</feature>
<feature type="site" description="Interacts with activating enzyme">
    <location>
        <position position="72"/>
    </location>
</feature>
<feature type="modified residue" description="Phosphoserine; by PINK1" evidence="2">
    <location>
        <position position="65"/>
    </location>
</feature>
<feature type="modified residue" description="ADP-ribosylglycine" evidence="2">
    <location>
        <position position="76"/>
    </location>
</feature>
<feature type="modified residue" description="Phosphoserine" evidence="2">
    <location>
        <position position="141"/>
    </location>
</feature>
<feature type="cross-link" description="Glycyl lysine isopeptide (Lys-Gly) (interchain with G-Cter in ubiquitin)" evidence="2">
    <location>
        <position position="6"/>
    </location>
</feature>
<feature type="cross-link" description="Glycyl lysine isopeptide (Lys-Gly) (interchain with G-Cter in ubiquitin)" evidence="2">
    <location>
        <position position="11"/>
    </location>
</feature>
<feature type="cross-link" description="Glycyl lysine isopeptide (Lys-Gly) (interchain with G-Cter in ubiquitin)" evidence="2">
    <location>
        <position position="27"/>
    </location>
</feature>
<feature type="cross-link" description="Glycyl lysine isopeptide (Lys-Gly) (interchain with G-Cter in ubiquitin)" evidence="2">
    <location>
        <position position="29"/>
    </location>
</feature>
<feature type="cross-link" description="Glycyl lysine isopeptide (Lys-Gly) (interchain with G-Cter in ubiquitin)" evidence="2">
    <location>
        <position position="33"/>
    </location>
</feature>
<feature type="cross-link" description="Glycyl lysine isopeptide (Lys-Gly) (interchain with G-Cter in ubiquitin)" evidence="2">
    <location>
        <position position="48"/>
    </location>
</feature>
<feature type="cross-link" description="Glycyl lysine isopeptide (Lys-Gly) (interchain with G-Cter in ubiquitin)" evidence="2">
    <location>
        <position position="63"/>
    </location>
</feature>
<feature type="cross-link" description="Glycyl lysine isopeptide (Gly-Lys) (interchain with K-? in acceptor proteins)" evidence="3">
    <location>
        <position position="76"/>
    </location>
</feature>
<sequence>MQIFVKTLTGKTITLEVEPSDTIENVKAKIQDKEGIPPDQQRLIFAGKQLEDGRTLSDYNIQKESTLHLVLRLRGGMQIFVKTLTGKTITLEVEPSDTIENVKAKIQDKEGIPPDQQRLIFAGKQLEDGRTLSDYNIQKESTLHLVLRLRGGMQIFVKTLTGKTITLEVEPSDTIENVKAKIQDKEGIPPDQQRLIFAGKQLEDGRTLSDYNIQKESTLHLVLRLRGGMQIFVKTLTGKTITLEVEPSDTIENVKAKIQDKEGIPPDQQRLIFAGKQLEDGRTLSDYNIQKESTLHLVLRLRGGVYASPIF</sequence>
<organism>
    <name type="scientific">Cavia porcellus</name>
    <name type="common">Guinea pig</name>
    <dbReference type="NCBI Taxonomy" id="10141"/>
    <lineage>
        <taxon>Eukaryota</taxon>
        <taxon>Metazoa</taxon>
        <taxon>Chordata</taxon>
        <taxon>Craniata</taxon>
        <taxon>Vertebrata</taxon>
        <taxon>Euteleostomi</taxon>
        <taxon>Mammalia</taxon>
        <taxon>Eutheria</taxon>
        <taxon>Euarchontoglires</taxon>
        <taxon>Glires</taxon>
        <taxon>Rodentia</taxon>
        <taxon>Hystricomorpha</taxon>
        <taxon>Caviidae</taxon>
        <taxon>Cavia</taxon>
    </lineage>
</organism>
<comment type="function">
    <molecule>Ubiquitin</molecule>
    <text evidence="2">Exists either covalently attached to another protein, or free (unanchored). When covalently bound, it is conjugated to target proteins via an isopeptide bond either as a monomer (monoubiquitin), a polymer linked via different Lys residues of the ubiquitin (polyubiquitin chains) or a linear polymer linked via the initiator Met of the ubiquitin (linear polyubiquitin chains). Polyubiquitin chains, when attached to a target protein, have different functions depending on the Lys residue of the ubiquitin that is linked: Lys-6-linked may be involved in DNA repair; Lys-11-linked is involved in ERAD (endoplasmic reticulum-associated degradation) and in cell-cycle regulation; Lys-29-linked is involved in proteotoxic stress response and cell cycle; Lys-33-linked is involved in kinase modification; Lys-48-linked is involved in protein degradation via the proteasome; Lys-63-linked is involved in endocytosis, DNA-damage responses as well as in signaling processes leading to activation of the transcription factor NF-kappa-B. Linear polymer chains formed via attachment by the initiator Met lead to cell signaling. Ubiquitin is usually conjugated to Lys residues of target proteins, however, in rare cases, conjugation to Cys or Ser residues has been observed. When polyubiquitin is free (unanchored-polyubiquitin), it also has distinct roles, such as in activation of protein kinases, and in signaling.</text>
</comment>
<comment type="subunit">
    <text evidence="2">Interacts with SKP1-KMD2A and SKP1-KMD2B complexes.</text>
</comment>
<comment type="subcellular location">
    <molecule>Ubiquitin</molecule>
    <subcellularLocation>
        <location evidence="1">Cytoplasm</location>
    </subcellularLocation>
    <subcellularLocation>
        <location evidence="1">Nucleus</location>
    </subcellularLocation>
    <subcellularLocation>
        <location evidence="2">Mitochondrion outer membrane</location>
        <topology evidence="2">Peripheral membrane protein</topology>
    </subcellularLocation>
</comment>
<comment type="PTM">
    <molecule>Ubiquitin</molecule>
    <text evidence="2">Phosphorylated at Ser-65 by PINK1 during mitophagy. Phosphorylated ubiquitin specifically binds and activates parkin (PRKN), triggering mitophagy. Phosphorylation does not affect E1-mediated E2 charging of ubiquitin but affects discharging of E2 enzymes to form polyubiquitin chains. It also affects deubiquitination by deubiquitinase enzymes such as USP30.</text>
</comment>
<comment type="PTM">
    <molecule>Ubiquitin</molecule>
    <text evidence="2">Mono-ADP-ribosylated at the C-terminus by PARP9, a component of the PPAR9-DTX3L complex. ADP-ribosylation requires processing by E1 and E2 enzymes and prevents ubiquitin conjugation to substrates such as histones.</text>
</comment>
<comment type="miscellaneous">
    <text>Ubiquitin is encoded by 4 different genes. UBA52 and RPS27A genes code for a single copy of ubiquitin fused to the ribosomal proteins eL40 and eS31, respectively. UBB and UBC genes code for a polyubiquitin precursor with exact head to tail repeats, the number of repeats differ between species and strains.</text>
</comment>
<comment type="miscellaneous">
    <text>For the sake of clarity sequence features are annotated only for the first chain, and are not repeated for each of the following chains.</text>
</comment>
<comment type="similarity">
    <text evidence="4">Belongs to the ubiquitin family.</text>
</comment>
<protein>
    <recommendedName>
        <fullName>Polyubiquitin-B</fullName>
    </recommendedName>
    <component>
        <recommendedName>
            <fullName>Ubiquitin</fullName>
        </recommendedName>
    </component>
</protein>
<accession>P0CG54</accession>
<accession>P02248</accession>
<accession>P02249</accession>
<accession>P02250</accession>
<accession>P62977</accession>
<accession>Q29120</accession>
<accession>Q91887</accession>
<accession>Q91888</accession>